<gene>
    <name evidence="1" type="primary">psbD1</name>
    <name type="ordered locus">Heak452_Cp012</name>
</gene>
<gene>
    <name evidence="1" type="primary">psbD2</name>
    <name type="ordered locus">Heak452_Cp056</name>
</gene>
<name>PSBD_HETA4</name>
<dbReference type="EC" id="1.10.3.9" evidence="1"/>
<dbReference type="EMBL" id="EU168191">
    <property type="protein sequence ID" value="ABV70060.1"/>
    <property type="molecule type" value="Genomic_DNA"/>
</dbReference>
<dbReference type="EMBL" id="EU168191">
    <property type="protein sequence ID" value="ABV70104.1"/>
    <property type="molecule type" value="Genomic_DNA"/>
</dbReference>
<dbReference type="SMR" id="B2XTH7"/>
<dbReference type="GO" id="GO:0009535">
    <property type="term" value="C:chloroplast thylakoid membrane"/>
    <property type="evidence" value="ECO:0007669"/>
    <property type="project" value="UniProtKB-SubCell"/>
</dbReference>
<dbReference type="GO" id="GO:0009523">
    <property type="term" value="C:photosystem II"/>
    <property type="evidence" value="ECO:0007669"/>
    <property type="project" value="UniProtKB-KW"/>
</dbReference>
<dbReference type="GO" id="GO:0016168">
    <property type="term" value="F:chlorophyll binding"/>
    <property type="evidence" value="ECO:0007669"/>
    <property type="project" value="UniProtKB-UniRule"/>
</dbReference>
<dbReference type="GO" id="GO:0045156">
    <property type="term" value="F:electron transporter, transferring electrons within the cyclic electron transport pathway of photosynthesis activity"/>
    <property type="evidence" value="ECO:0007669"/>
    <property type="project" value="InterPro"/>
</dbReference>
<dbReference type="GO" id="GO:0005506">
    <property type="term" value="F:iron ion binding"/>
    <property type="evidence" value="ECO:0007669"/>
    <property type="project" value="UniProtKB-UniRule"/>
</dbReference>
<dbReference type="GO" id="GO:0016491">
    <property type="term" value="F:oxidoreductase activity"/>
    <property type="evidence" value="ECO:0007669"/>
    <property type="project" value="UniProtKB-KW"/>
</dbReference>
<dbReference type="GO" id="GO:0009772">
    <property type="term" value="P:photosynthetic electron transport in photosystem II"/>
    <property type="evidence" value="ECO:0007669"/>
    <property type="project" value="InterPro"/>
</dbReference>
<dbReference type="CDD" id="cd09288">
    <property type="entry name" value="Photosystem-II_D2"/>
    <property type="match status" value="1"/>
</dbReference>
<dbReference type="FunFam" id="1.20.85.10:FF:000001">
    <property type="entry name" value="photosystem II D2 protein-like"/>
    <property type="match status" value="1"/>
</dbReference>
<dbReference type="Gene3D" id="1.20.85.10">
    <property type="entry name" value="Photosystem II protein D1-like"/>
    <property type="match status" value="1"/>
</dbReference>
<dbReference type="HAMAP" id="MF_01383">
    <property type="entry name" value="PSII_PsbD_D2"/>
    <property type="match status" value="1"/>
</dbReference>
<dbReference type="InterPro" id="IPR055266">
    <property type="entry name" value="D1/D2"/>
</dbReference>
<dbReference type="InterPro" id="IPR036854">
    <property type="entry name" value="Photo_II_D1/D2_sf"/>
</dbReference>
<dbReference type="InterPro" id="IPR000484">
    <property type="entry name" value="Photo_RC_L/M"/>
</dbReference>
<dbReference type="InterPro" id="IPR055265">
    <property type="entry name" value="Photo_RC_L/M_CS"/>
</dbReference>
<dbReference type="InterPro" id="IPR005868">
    <property type="entry name" value="PSII_PsbD/D2"/>
</dbReference>
<dbReference type="NCBIfam" id="TIGR01152">
    <property type="entry name" value="psbD"/>
    <property type="match status" value="1"/>
</dbReference>
<dbReference type="PANTHER" id="PTHR33149:SF12">
    <property type="entry name" value="PHOTOSYSTEM II D2 PROTEIN"/>
    <property type="match status" value="1"/>
</dbReference>
<dbReference type="PANTHER" id="PTHR33149">
    <property type="entry name" value="PHOTOSYSTEM II PROTEIN D1"/>
    <property type="match status" value="1"/>
</dbReference>
<dbReference type="Pfam" id="PF00124">
    <property type="entry name" value="Photo_RC"/>
    <property type="match status" value="1"/>
</dbReference>
<dbReference type="PRINTS" id="PR00256">
    <property type="entry name" value="REACTNCENTRE"/>
</dbReference>
<dbReference type="SUPFAM" id="SSF81483">
    <property type="entry name" value="Bacterial photosystem II reaction centre, L and M subunits"/>
    <property type="match status" value="1"/>
</dbReference>
<dbReference type="PROSITE" id="PS00244">
    <property type="entry name" value="REACTION_CENTER"/>
    <property type="match status" value="1"/>
</dbReference>
<sequence length="351" mass="39122">MTIAIGQNQERGVFDLVDDWLKRDRFVFVGWSGLLLFPTAYLAVGGWFTGTTFVTSWYTHGLASSYLEGCNFLTAAVSTPANSMGHSLILLWGPEAQGDFTRWCQIGGLWTFVALHGAFGLIGFCLRQFEIARLVGIRPYNAIAFSGPISIFVSVFLLYPLGQASWFFAPSFGVAAIFRFLLFLQGFHNWTLNPFHMMGVAGILGGALLCAIHGATVENTLFEDGDAANTFRAFTPTQSEETYSMVTANRFWSQIFGVAFSNKRWLHFFMLFVPVTGLWTSAIGIVGLALNLRAYDFVSQELRAAEDPEFETFYTKNILLNEGIRAWMAAQDQPHENFVFPEEVLPRGNAL</sequence>
<keyword id="KW-0148">Chlorophyll</keyword>
<keyword id="KW-0150">Chloroplast</keyword>
<keyword id="KW-0157">Chromophore</keyword>
<keyword id="KW-0249">Electron transport</keyword>
<keyword id="KW-0408">Iron</keyword>
<keyword id="KW-0460">Magnesium</keyword>
<keyword id="KW-0472">Membrane</keyword>
<keyword id="KW-0479">Metal-binding</keyword>
<keyword id="KW-0560">Oxidoreductase</keyword>
<keyword id="KW-0602">Photosynthesis</keyword>
<keyword id="KW-0604">Photosystem II</keyword>
<keyword id="KW-0934">Plastid</keyword>
<keyword id="KW-0793">Thylakoid</keyword>
<keyword id="KW-0812">Transmembrane</keyword>
<keyword id="KW-1133">Transmembrane helix</keyword>
<keyword id="KW-0813">Transport</keyword>
<comment type="function">
    <text evidence="1">Photosystem II (PSII) is a light-driven water:plastoquinone oxidoreductase that uses light energy to abstract electrons from H(2)O, generating O(2) and a proton gradient subsequently used for ATP formation. It consists of a core antenna complex that captures photons, and an electron transfer chain that converts photonic excitation into a charge separation. The D1/D2 (PsbA/PsbD) reaction center heterodimer binds P680, the primary electron donor of PSII as well as several subsequent electron acceptors. D2 is needed for assembly of a stable PSII complex.</text>
</comment>
<comment type="catalytic activity">
    <reaction evidence="1">
        <text>2 a plastoquinone + 4 hnu + 2 H2O = 2 a plastoquinol + O2</text>
        <dbReference type="Rhea" id="RHEA:36359"/>
        <dbReference type="Rhea" id="RHEA-COMP:9561"/>
        <dbReference type="Rhea" id="RHEA-COMP:9562"/>
        <dbReference type="ChEBI" id="CHEBI:15377"/>
        <dbReference type="ChEBI" id="CHEBI:15379"/>
        <dbReference type="ChEBI" id="CHEBI:17757"/>
        <dbReference type="ChEBI" id="CHEBI:30212"/>
        <dbReference type="ChEBI" id="CHEBI:62192"/>
        <dbReference type="EC" id="1.10.3.9"/>
    </reaction>
</comment>
<comment type="cofactor">
    <text evidence="1">The D1/D2 heterodimer binds P680, chlorophylls that are the primary electron donor of PSII, and subsequent electron acceptors. It shares a non-heme iron and each subunit binds pheophytin, quinone, additional chlorophylls, carotenoids and lipids. There is also a Cl(-1) ion associated with D1 and D2, which is required for oxygen evolution. The PSII complex binds additional chlorophylls, carotenoids and specific lipids.</text>
</comment>
<comment type="subunit">
    <text evidence="1">PSII is composed of 1 copy each of membrane proteins PsbA, PsbB, PsbC, PsbD, PsbE, PsbF, PsbH, PsbI, PsbJ, PsbK, PsbL, PsbM, PsbT, PsbX, PsbY, PsbZ, Psb30/Ycf12, at least 3 peripheral proteins of the oxygen-evolving complex and a large number of cofactors. It forms dimeric complexes.</text>
</comment>
<comment type="subcellular location">
    <subcellularLocation>
        <location evidence="1">Plastid</location>
        <location evidence="1">Chloroplast thylakoid membrane</location>
        <topology evidence="1">Multi-pass membrane protein</topology>
    </subcellularLocation>
</comment>
<comment type="miscellaneous">
    <text evidence="1">2 of the reaction center chlorophylls (ChlD1 and ChlD2) are entirely coordinated by water.</text>
</comment>
<comment type="similarity">
    <text evidence="1">Belongs to the reaction center PufL/M/PsbA/D family.</text>
</comment>
<organism>
    <name type="scientific">Heterosigma akashiwo (strain CCMP452 / OLISTH)</name>
    <dbReference type="NCBI Taxonomy" id="536046"/>
    <lineage>
        <taxon>Eukaryota</taxon>
        <taxon>Sar</taxon>
        <taxon>Stramenopiles</taxon>
        <taxon>Ochrophyta</taxon>
        <taxon>Raphidophyceae</taxon>
        <taxon>Chattonellales</taxon>
        <taxon>Chattonellaceae</taxon>
        <taxon>Heterosigma</taxon>
    </lineage>
</organism>
<proteinExistence type="inferred from homology"/>
<geneLocation type="chloroplast"/>
<accession>B2XTH7</accession>
<protein>
    <recommendedName>
        <fullName evidence="1">Photosystem II D2 protein</fullName>
        <shortName evidence="1">PSII D2 protein</shortName>
        <ecNumber evidence="1">1.10.3.9</ecNumber>
    </recommendedName>
    <alternativeName>
        <fullName evidence="1">Photosystem Q(A) protein</fullName>
    </alternativeName>
</protein>
<feature type="chain" id="PRO_0000359706" description="Photosystem II D2 protein">
    <location>
        <begin position="1"/>
        <end position="351"/>
    </location>
</feature>
<feature type="transmembrane region" description="Helical" evidence="1">
    <location>
        <begin position="39"/>
        <end position="59"/>
    </location>
</feature>
<feature type="transmembrane region" description="Helical" evidence="1">
    <location>
        <begin position="123"/>
        <end position="139"/>
    </location>
</feature>
<feature type="transmembrane region" description="Helical" evidence="1">
    <location>
        <begin position="151"/>
        <end position="164"/>
    </location>
</feature>
<feature type="transmembrane region" description="Helical" evidence="1">
    <location>
        <begin position="206"/>
        <end position="226"/>
    </location>
</feature>
<feature type="transmembrane region" description="Helical" evidence="1">
    <location>
        <begin position="277"/>
        <end position="293"/>
    </location>
</feature>
<feature type="binding site" description="axial binding residue" evidence="1">
    <location>
        <position position="116"/>
    </location>
    <ligand>
        <name>chlorophyll a</name>
        <dbReference type="ChEBI" id="CHEBI:58416"/>
        <label>ChlzD2</label>
    </ligand>
    <ligandPart>
        <name>Mg</name>
        <dbReference type="ChEBI" id="CHEBI:25107"/>
    </ligandPart>
</feature>
<feature type="binding site" evidence="1">
    <location>
        <position position="128"/>
    </location>
    <ligand>
        <name>pheophytin a</name>
        <dbReference type="ChEBI" id="CHEBI:136840"/>
        <label>D2</label>
    </ligand>
</feature>
<feature type="binding site" evidence="1">
    <location>
        <position position="141"/>
    </location>
    <ligand>
        <name>pheophytin a</name>
        <dbReference type="ChEBI" id="CHEBI:136840"/>
        <label>D2</label>
    </ligand>
</feature>
<feature type="binding site" description="axial binding residue" evidence="1">
    <location>
        <position position="196"/>
    </location>
    <ligand>
        <name>chlorophyll a</name>
        <dbReference type="ChEBI" id="CHEBI:58416"/>
        <label>PD2</label>
    </ligand>
    <ligandPart>
        <name>Mg</name>
        <dbReference type="ChEBI" id="CHEBI:25107"/>
    </ligandPart>
</feature>
<feature type="binding site" evidence="1">
    <location>
        <position position="213"/>
    </location>
    <ligand>
        <name>a plastoquinone</name>
        <dbReference type="ChEBI" id="CHEBI:17757"/>
        <label>Q(A)</label>
    </ligand>
</feature>
<feature type="binding site" evidence="1">
    <location>
        <position position="213"/>
    </location>
    <ligand>
        <name>Fe cation</name>
        <dbReference type="ChEBI" id="CHEBI:24875"/>
        <note>ligand shared with heterodimeric partner</note>
    </ligand>
</feature>
<feature type="binding site" evidence="1">
    <location>
        <position position="260"/>
    </location>
    <ligand>
        <name>a plastoquinone</name>
        <dbReference type="ChEBI" id="CHEBI:17757"/>
        <label>Q(A)</label>
    </ligand>
</feature>
<feature type="binding site" evidence="1">
    <location>
        <position position="267"/>
    </location>
    <ligand>
        <name>Fe cation</name>
        <dbReference type="ChEBI" id="CHEBI:24875"/>
        <note>ligand shared with heterodimeric partner</note>
    </ligand>
</feature>
<evidence type="ECO:0000255" key="1">
    <source>
        <dbReference type="HAMAP-Rule" id="MF_01383"/>
    </source>
</evidence>
<reference key="1">
    <citation type="journal article" date="2008" name="BMC Genomics">
        <title>Chloroplast genome sequencing analysis of Heterosigma akashiwo CCMP452 (West Atlantic) and NIES293 (West Pacific) strains.</title>
        <authorList>
            <person name="Cattolico R.A."/>
            <person name="Jacobs M.A."/>
            <person name="Zhou Y."/>
            <person name="Chang J."/>
            <person name="Duplessis M."/>
            <person name="Lybrand T."/>
            <person name="McKay J."/>
            <person name="Ong H.C."/>
            <person name="Sims E."/>
            <person name="Rocap G."/>
        </authorList>
    </citation>
    <scope>NUCLEOTIDE SEQUENCE [LARGE SCALE GENOMIC DNA]</scope>
    <source>
        <strain>CCMP452</strain>
    </source>
</reference>